<comment type="function">
    <text evidence="1">Binds to the 23S rRNA.</text>
</comment>
<comment type="subunit">
    <text evidence="1">Part of the 50S ribosomal subunit.</text>
</comment>
<comment type="similarity">
    <text evidence="1">Belongs to the universal ribosomal protein uL15 family.</text>
</comment>
<reference key="1">
    <citation type="journal article" date="2004" name="Nucleic Acids Res.">
        <title>Genome sequence of Symbiobacterium thermophilum, an uncultivable bacterium that depends on microbial commensalism.</title>
        <authorList>
            <person name="Ueda K."/>
            <person name="Yamashita A."/>
            <person name="Ishikawa J."/>
            <person name="Shimada M."/>
            <person name="Watsuji T."/>
            <person name="Morimura K."/>
            <person name="Ikeda H."/>
            <person name="Hattori M."/>
            <person name="Beppu T."/>
        </authorList>
    </citation>
    <scope>NUCLEOTIDE SEQUENCE [LARGE SCALE GENOMIC DNA]</scope>
    <source>
        <strain>DSM 24528 / JCM 14929 / IAM 14863 / T</strain>
    </source>
</reference>
<feature type="chain" id="PRO_0000104835" description="Large ribosomal subunit protein uL15">
    <location>
        <begin position="1"/>
        <end position="155"/>
    </location>
</feature>
<feature type="region of interest" description="Disordered" evidence="2">
    <location>
        <begin position="1"/>
        <end position="63"/>
    </location>
</feature>
<feature type="compositionally biased region" description="Gly residues" evidence="2">
    <location>
        <begin position="21"/>
        <end position="31"/>
    </location>
</feature>
<feature type="compositionally biased region" description="Gly residues" evidence="2">
    <location>
        <begin position="42"/>
        <end position="52"/>
    </location>
</feature>
<protein>
    <recommendedName>
        <fullName evidence="1">Large ribosomal subunit protein uL15</fullName>
    </recommendedName>
    <alternativeName>
        <fullName evidence="3">50S ribosomal protein L15</fullName>
    </alternativeName>
</protein>
<accession>Q67JW2</accession>
<evidence type="ECO:0000255" key="1">
    <source>
        <dbReference type="HAMAP-Rule" id="MF_01341"/>
    </source>
</evidence>
<evidence type="ECO:0000256" key="2">
    <source>
        <dbReference type="SAM" id="MobiDB-lite"/>
    </source>
</evidence>
<evidence type="ECO:0000305" key="3"/>
<organism>
    <name type="scientific">Symbiobacterium thermophilum (strain DSM 24528 / JCM 14929 / IAM 14863 / T)</name>
    <dbReference type="NCBI Taxonomy" id="292459"/>
    <lineage>
        <taxon>Bacteria</taxon>
        <taxon>Bacillati</taxon>
        <taxon>Bacillota</taxon>
        <taxon>Clostridia</taxon>
        <taxon>Eubacteriales</taxon>
        <taxon>Symbiobacteriaceae</taxon>
        <taxon>Symbiobacterium</taxon>
    </lineage>
</organism>
<name>RL15_SYMTH</name>
<keyword id="KW-1185">Reference proteome</keyword>
<keyword id="KW-0687">Ribonucleoprotein</keyword>
<keyword id="KW-0689">Ribosomal protein</keyword>
<keyword id="KW-0694">RNA-binding</keyword>
<keyword id="KW-0699">rRNA-binding</keyword>
<dbReference type="EMBL" id="AP006840">
    <property type="protein sequence ID" value="BAD42038.1"/>
    <property type="molecule type" value="Genomic_DNA"/>
</dbReference>
<dbReference type="RefSeq" id="WP_011197171.1">
    <property type="nucleotide sequence ID" value="NC_006177.1"/>
</dbReference>
<dbReference type="SMR" id="Q67JW2"/>
<dbReference type="STRING" id="292459.STH3056"/>
<dbReference type="KEGG" id="sth:STH3056"/>
<dbReference type="eggNOG" id="COG0200">
    <property type="taxonomic scope" value="Bacteria"/>
</dbReference>
<dbReference type="HOGENOM" id="CLU_055188_4_2_9"/>
<dbReference type="OrthoDB" id="9810293at2"/>
<dbReference type="Proteomes" id="UP000000417">
    <property type="component" value="Chromosome"/>
</dbReference>
<dbReference type="GO" id="GO:0022625">
    <property type="term" value="C:cytosolic large ribosomal subunit"/>
    <property type="evidence" value="ECO:0007669"/>
    <property type="project" value="TreeGrafter"/>
</dbReference>
<dbReference type="GO" id="GO:0019843">
    <property type="term" value="F:rRNA binding"/>
    <property type="evidence" value="ECO:0007669"/>
    <property type="project" value="UniProtKB-UniRule"/>
</dbReference>
<dbReference type="GO" id="GO:0003735">
    <property type="term" value="F:structural constituent of ribosome"/>
    <property type="evidence" value="ECO:0007669"/>
    <property type="project" value="InterPro"/>
</dbReference>
<dbReference type="GO" id="GO:0006412">
    <property type="term" value="P:translation"/>
    <property type="evidence" value="ECO:0007669"/>
    <property type="project" value="UniProtKB-UniRule"/>
</dbReference>
<dbReference type="Gene3D" id="3.100.10.10">
    <property type="match status" value="1"/>
</dbReference>
<dbReference type="HAMAP" id="MF_01341">
    <property type="entry name" value="Ribosomal_uL15"/>
    <property type="match status" value="1"/>
</dbReference>
<dbReference type="InterPro" id="IPR030878">
    <property type="entry name" value="Ribosomal_uL15"/>
</dbReference>
<dbReference type="InterPro" id="IPR021131">
    <property type="entry name" value="Ribosomal_uL15/eL18"/>
</dbReference>
<dbReference type="InterPro" id="IPR036227">
    <property type="entry name" value="Ribosomal_uL15/eL18_sf"/>
</dbReference>
<dbReference type="InterPro" id="IPR005749">
    <property type="entry name" value="Ribosomal_uL15_bac-type"/>
</dbReference>
<dbReference type="InterPro" id="IPR001196">
    <property type="entry name" value="Ribosomal_uL15_CS"/>
</dbReference>
<dbReference type="NCBIfam" id="TIGR01071">
    <property type="entry name" value="rplO_bact"/>
    <property type="match status" value="1"/>
</dbReference>
<dbReference type="PANTHER" id="PTHR12934">
    <property type="entry name" value="50S RIBOSOMAL PROTEIN L15"/>
    <property type="match status" value="1"/>
</dbReference>
<dbReference type="PANTHER" id="PTHR12934:SF11">
    <property type="entry name" value="LARGE RIBOSOMAL SUBUNIT PROTEIN UL15M"/>
    <property type="match status" value="1"/>
</dbReference>
<dbReference type="Pfam" id="PF00828">
    <property type="entry name" value="Ribosomal_L27A"/>
    <property type="match status" value="1"/>
</dbReference>
<dbReference type="SUPFAM" id="SSF52080">
    <property type="entry name" value="Ribosomal proteins L15p and L18e"/>
    <property type="match status" value="1"/>
</dbReference>
<dbReference type="PROSITE" id="PS00475">
    <property type="entry name" value="RIBOSOMAL_L15"/>
    <property type="match status" value="1"/>
</dbReference>
<gene>
    <name evidence="1" type="primary">rplO</name>
    <name type="ordered locus">STH3056</name>
</gene>
<proteinExistence type="inferred from homology"/>
<sequence length="155" mass="16520">MKLHELAPNPGARHERKRVGRGIGSGLGKTSGRGHKGQKARSGGGVRPGFEGGQMPLTRRLPKRGFSNAPFKVRYEVVNVADLERFEAGTVVTPELLDETRVCKNATKGVKVLGTGELTKALTVRAHAVSESARQKIEAAGGKVEVIGEATEEVK</sequence>